<sequence>MLVLSRKANESIKIDSNIEISILEIKKDSVKIAIKAPANIKILRSEIYDIIKEENKKSILQDKNNIHKIKNLFDYLSK</sequence>
<gene>
    <name evidence="1" type="primary">csrA</name>
    <name type="ordered locus">BT0184</name>
</gene>
<feature type="chain" id="PRO_1000123615" description="Translational regulator CsrA">
    <location>
        <begin position="1"/>
        <end position="78"/>
    </location>
</feature>
<reference key="1">
    <citation type="submission" date="2004-12" db="EMBL/GenBank/DDBJ databases">
        <title>The genome sequence of Borrelia hermsii and Borrelia turicatae: comparative analysis of two agents of endemic N. America relapsing fever.</title>
        <authorList>
            <person name="Porcella S.F."/>
            <person name="Raffel S.J."/>
            <person name="Schrumpf M.E."/>
            <person name="Montgomery B."/>
            <person name="Smith T."/>
            <person name="Schwan T.G."/>
        </authorList>
    </citation>
    <scope>NUCLEOTIDE SEQUENCE [LARGE SCALE GENOMIC DNA]</scope>
    <source>
        <strain>91E135</strain>
    </source>
</reference>
<proteinExistence type="inferred from homology"/>
<dbReference type="EMBL" id="CP000049">
    <property type="protein sequence ID" value="AAX17521.1"/>
    <property type="molecule type" value="Genomic_DNA"/>
</dbReference>
<dbReference type="RefSeq" id="WP_011772140.1">
    <property type="nucleotide sequence ID" value="NZ_CP073176.1"/>
</dbReference>
<dbReference type="SMR" id="A1QYX9"/>
<dbReference type="KEGG" id="btu:BT0184"/>
<dbReference type="eggNOG" id="COG1551">
    <property type="taxonomic scope" value="Bacteria"/>
</dbReference>
<dbReference type="HOGENOM" id="CLU_164837_0_2_12"/>
<dbReference type="Proteomes" id="UP000001205">
    <property type="component" value="Chromosome"/>
</dbReference>
<dbReference type="GO" id="GO:0005829">
    <property type="term" value="C:cytosol"/>
    <property type="evidence" value="ECO:0007669"/>
    <property type="project" value="TreeGrafter"/>
</dbReference>
<dbReference type="GO" id="GO:0048027">
    <property type="term" value="F:mRNA 5'-UTR binding"/>
    <property type="evidence" value="ECO:0007669"/>
    <property type="project" value="UniProtKB-UniRule"/>
</dbReference>
<dbReference type="GO" id="GO:0044781">
    <property type="term" value="P:bacterial-type flagellum organization"/>
    <property type="evidence" value="ECO:0007669"/>
    <property type="project" value="UniProtKB-KW"/>
</dbReference>
<dbReference type="GO" id="GO:0006402">
    <property type="term" value="P:mRNA catabolic process"/>
    <property type="evidence" value="ECO:0007669"/>
    <property type="project" value="InterPro"/>
</dbReference>
<dbReference type="GO" id="GO:0045947">
    <property type="term" value="P:negative regulation of translational initiation"/>
    <property type="evidence" value="ECO:0007669"/>
    <property type="project" value="UniProtKB-UniRule"/>
</dbReference>
<dbReference type="GO" id="GO:1902208">
    <property type="term" value="P:regulation of bacterial-type flagellum assembly"/>
    <property type="evidence" value="ECO:0007669"/>
    <property type="project" value="UniProtKB-UniRule"/>
</dbReference>
<dbReference type="GO" id="GO:0006109">
    <property type="term" value="P:regulation of carbohydrate metabolic process"/>
    <property type="evidence" value="ECO:0007669"/>
    <property type="project" value="InterPro"/>
</dbReference>
<dbReference type="FunFam" id="2.60.40.4380:FF:000002">
    <property type="entry name" value="Translational regulator CsrA"/>
    <property type="match status" value="1"/>
</dbReference>
<dbReference type="Gene3D" id="2.60.40.4380">
    <property type="entry name" value="Translational regulator CsrA"/>
    <property type="match status" value="1"/>
</dbReference>
<dbReference type="HAMAP" id="MF_00167">
    <property type="entry name" value="CsrA"/>
    <property type="match status" value="1"/>
</dbReference>
<dbReference type="InterPro" id="IPR003751">
    <property type="entry name" value="CsrA"/>
</dbReference>
<dbReference type="InterPro" id="IPR036107">
    <property type="entry name" value="CsrA_sf"/>
</dbReference>
<dbReference type="NCBIfam" id="TIGR00202">
    <property type="entry name" value="csrA"/>
    <property type="match status" value="1"/>
</dbReference>
<dbReference type="NCBIfam" id="NF002469">
    <property type="entry name" value="PRK01712.1"/>
    <property type="match status" value="1"/>
</dbReference>
<dbReference type="PANTHER" id="PTHR34984">
    <property type="entry name" value="CARBON STORAGE REGULATOR"/>
    <property type="match status" value="1"/>
</dbReference>
<dbReference type="PANTHER" id="PTHR34984:SF1">
    <property type="entry name" value="CARBON STORAGE REGULATOR"/>
    <property type="match status" value="1"/>
</dbReference>
<dbReference type="Pfam" id="PF02599">
    <property type="entry name" value="CsrA"/>
    <property type="match status" value="1"/>
</dbReference>
<dbReference type="SUPFAM" id="SSF117130">
    <property type="entry name" value="CsrA-like"/>
    <property type="match status" value="1"/>
</dbReference>
<name>CSRA_BORT9</name>
<evidence type="ECO:0000255" key="1">
    <source>
        <dbReference type="HAMAP-Rule" id="MF_00167"/>
    </source>
</evidence>
<comment type="function">
    <text evidence="1">A translational regulator that binds mRNA to regulate translation initiation and/or mRNA stability. Usually binds in the 5'-UTR at or near the Shine-Dalgarno sequence preventing ribosome-binding, thus repressing translation. Its main target seems to be the major flagellin gene, while its function is anatagonized by FliW.</text>
</comment>
<comment type="subunit">
    <text evidence="1">Homodimer; the beta-strands of each monomer intercalate to form a hydrophobic core, while the alpha-helices form wings that extend away from the core.</text>
</comment>
<comment type="subcellular location">
    <subcellularLocation>
        <location evidence="1">Cytoplasm</location>
    </subcellularLocation>
</comment>
<comment type="similarity">
    <text evidence="1">Belongs to the CsrA/RsmA family.</text>
</comment>
<organism>
    <name type="scientific">Borrelia turicatae (strain 91E135)</name>
    <dbReference type="NCBI Taxonomy" id="314724"/>
    <lineage>
        <taxon>Bacteria</taxon>
        <taxon>Pseudomonadati</taxon>
        <taxon>Spirochaetota</taxon>
        <taxon>Spirochaetia</taxon>
        <taxon>Spirochaetales</taxon>
        <taxon>Borreliaceae</taxon>
        <taxon>Borrelia</taxon>
    </lineage>
</organism>
<keyword id="KW-1005">Bacterial flagellum biogenesis</keyword>
<keyword id="KW-0963">Cytoplasm</keyword>
<keyword id="KW-1185">Reference proteome</keyword>
<keyword id="KW-0678">Repressor</keyword>
<keyword id="KW-0694">RNA-binding</keyword>
<keyword id="KW-0810">Translation regulation</keyword>
<accession>A1QYX9</accession>
<protein>
    <recommendedName>
        <fullName evidence="1">Translational regulator CsrA</fullName>
    </recommendedName>
</protein>